<name>NLP23_PHYCP</name>
<comment type="function">
    <text evidence="4">Secreted effector that contributes strongly to virulence during infection by P.capsici.</text>
</comment>
<comment type="subcellular location">
    <subcellularLocation>
        <location evidence="7">Secreted</location>
    </subcellularLocation>
</comment>
<comment type="domain">
    <text evidence="8">Key residues/motif important for the effector activities are degenerated in most NLPs, including the nlp24 peptide consisting of the conserved region I (11-aa immunogenic part) and conserved region II (the heptapeptide GHRHDWE motif) that is important for phytotoxic activity.</text>
</comment>
<comment type="similarity">
    <text evidence="6">Belongs to the Necrosis inducing protein (NPP1) family.</text>
</comment>
<proteinExistence type="evidence at transcript level"/>
<keyword id="KW-0325">Glycoprotein</keyword>
<keyword id="KW-0964">Secreted</keyword>
<keyword id="KW-0732">Signal</keyword>
<keyword id="KW-0843">Virulence</keyword>
<reference key="1">
    <citation type="journal article" date="2018" name="Mol. Genet. Genomics">
        <title>Identification and functional analysis of the NLP-encoding genes from the phytopathogenic oomycete Phytophthora capsici.</title>
        <authorList>
            <person name="Chen X.R."/>
            <person name="Huang S.X."/>
            <person name="Zhang Y."/>
            <person name="Sheng G.L."/>
            <person name="Li Y.P."/>
            <person name="Zhu F."/>
        </authorList>
    </citation>
    <scope>NUCLEOTIDE SEQUENCE [MRNA]</scope>
    <scope>FUNCTION</scope>
    <scope>DOMAIN</scope>
    <source>
        <strain>Pc537</strain>
    </source>
</reference>
<reference key="2">
    <citation type="submission" date="2018-01" db="EMBL/GenBank/DDBJ databases">
        <authorList>
            <person name="Gaut B.S."/>
            <person name="Morton B.R."/>
            <person name="Clegg M.T."/>
            <person name="Duvall M.R."/>
        </authorList>
    </citation>
    <scope>NUCLEOTIDE SEQUENCE [MRNA]</scope>
    <source>
        <strain>Pc537</strain>
    </source>
</reference>
<gene>
    <name evidence="5" type="ORF">Pc576423</name>
</gene>
<protein>
    <recommendedName>
        <fullName evidence="5">NLP effector protein Pc576423</fullName>
    </recommendedName>
    <alternativeName>
        <fullName evidence="5">Necrosis-inducing Pc576423</fullName>
    </alternativeName>
    <alternativeName>
        <fullName evidence="5">Nep1-like protein Pc576423</fullName>
    </alternativeName>
</protein>
<dbReference type="EMBL" id="MG813949">
    <property type="protein sequence ID" value="AVR54642.1"/>
    <property type="molecule type" value="mRNA"/>
</dbReference>
<dbReference type="SMR" id="A0A2R3ZVF5"/>
<dbReference type="VEuPathDB" id="FungiDB:DVH05_028339"/>
<dbReference type="GO" id="GO:0005576">
    <property type="term" value="C:extracellular region"/>
    <property type="evidence" value="ECO:0007669"/>
    <property type="project" value="UniProtKB-SubCell"/>
</dbReference>
<dbReference type="InterPro" id="IPR008701">
    <property type="entry name" value="NPP1"/>
</dbReference>
<dbReference type="PANTHER" id="PTHR33657">
    <property type="entry name" value="DOMAIN PROTEIN, PUTATIVE (AFU_ORTHOLOGUE AFUA_5G00600)-RELATED"/>
    <property type="match status" value="1"/>
</dbReference>
<dbReference type="PANTHER" id="PTHR33657:SF8">
    <property type="entry name" value="DOMAIN PROTEIN, PUTATIVE (AFU_ORTHOLOGUE AFUA_5G00600)-RELATED"/>
    <property type="match status" value="1"/>
</dbReference>
<dbReference type="Pfam" id="PF05630">
    <property type="entry name" value="NPP1"/>
    <property type="match status" value="1"/>
</dbReference>
<dbReference type="PIRSF" id="PIRSF029958">
    <property type="entry name" value="Necrosis-inducing_protein"/>
    <property type="match status" value="1"/>
</dbReference>
<evidence type="ECO:0000250" key="1">
    <source>
        <dbReference type="UniProtKB" id="L7NCS1"/>
    </source>
</evidence>
<evidence type="ECO:0000255" key="2"/>
<evidence type="ECO:0000255" key="3">
    <source>
        <dbReference type="PROSITE-ProRule" id="PRU00498"/>
    </source>
</evidence>
<evidence type="ECO:0000269" key="4">
    <source>
    </source>
</evidence>
<evidence type="ECO:0000303" key="5">
    <source>
    </source>
</evidence>
<evidence type="ECO:0000305" key="6"/>
<evidence type="ECO:0000305" key="7">
    <source>
    </source>
</evidence>
<evidence type="ECO:0000305" key="8">
    <source ref="2"/>
</evidence>
<feature type="signal peptide" evidence="2">
    <location>
        <begin position="1"/>
        <end position="18"/>
    </location>
</feature>
<feature type="chain" id="PRO_5015345357" description="NLP effector protein Pc576423">
    <location>
        <begin position="19"/>
        <end position="234"/>
    </location>
</feature>
<feature type="short sequence motif" description="Hepta-peptide GHRHDWE motif" evidence="1">
    <location>
        <begin position="119"/>
        <end position="125"/>
    </location>
</feature>
<feature type="glycosylation site" description="N-linked (GlcNAc...) asparagine" evidence="3">
    <location>
        <position position="35"/>
    </location>
</feature>
<feature type="glycosylation site" description="N-linked (GlcNAc...) asparagine" evidence="3">
    <location>
        <position position="66"/>
    </location>
</feature>
<accession>A0A2R3ZVF5</accession>
<organism>
    <name type="scientific">Phytophthora capsici</name>
    <dbReference type="NCBI Taxonomy" id="4784"/>
    <lineage>
        <taxon>Eukaryota</taxon>
        <taxon>Sar</taxon>
        <taxon>Stramenopiles</taxon>
        <taxon>Oomycota</taxon>
        <taxon>Peronosporales</taxon>
        <taxon>Peronosporaceae</taxon>
        <taxon>Phytophthora</taxon>
    </lineage>
</organism>
<sequence length="234" mass="25678">MNLRAIAVTFATFAGANAAVIDHDQVIPFAQPMPNTTLQSVAIQFKPQIYINNGCHPYPAVDADGNTSGGLKPTGSQSAGCKGSGYGSQIYGRAVEYEGVYAFMYSWYMPKDETLDGQGHRHDWENCVVWLDSLDRPSIVALSASYHSTYNYYYPPSSSYLDGNSAKIQYSTSWIVLDHSLSATSTAGEIQDLIMWDQLTDAARTALEDTDFGSANVPFKEDNFIAKLAKAYYV</sequence>